<proteinExistence type="inferred from homology"/>
<protein>
    <recommendedName>
        <fullName evidence="1">DNA-directed RNA polymerase subunit beta</fullName>
        <shortName evidence="1">RNAP subunit beta</shortName>
        <ecNumber evidence="1">2.7.7.6</ecNumber>
    </recommendedName>
    <alternativeName>
        <fullName evidence="1">RNA polymerase subunit beta</fullName>
    </alternativeName>
    <alternativeName>
        <fullName evidence="1">Transcriptase subunit beta</fullName>
    </alternativeName>
</protein>
<dbReference type="EC" id="2.7.7.6" evidence="1"/>
<dbReference type="EMBL" id="CP000319">
    <property type="protein sequence ID" value="ABE62353.1"/>
    <property type="molecule type" value="Genomic_DNA"/>
</dbReference>
<dbReference type="RefSeq" id="WP_011510042.1">
    <property type="nucleotide sequence ID" value="NC_007964.1"/>
</dbReference>
<dbReference type="SMR" id="Q1QN44"/>
<dbReference type="STRING" id="323097.Nham_1531"/>
<dbReference type="KEGG" id="nha:Nham_1531"/>
<dbReference type="eggNOG" id="COG0085">
    <property type="taxonomic scope" value="Bacteria"/>
</dbReference>
<dbReference type="HOGENOM" id="CLU_000524_4_0_5"/>
<dbReference type="OrthoDB" id="9803954at2"/>
<dbReference type="Proteomes" id="UP000001953">
    <property type="component" value="Chromosome"/>
</dbReference>
<dbReference type="GO" id="GO:0000428">
    <property type="term" value="C:DNA-directed RNA polymerase complex"/>
    <property type="evidence" value="ECO:0007669"/>
    <property type="project" value="UniProtKB-KW"/>
</dbReference>
<dbReference type="GO" id="GO:0003677">
    <property type="term" value="F:DNA binding"/>
    <property type="evidence" value="ECO:0007669"/>
    <property type="project" value="UniProtKB-UniRule"/>
</dbReference>
<dbReference type="GO" id="GO:0003899">
    <property type="term" value="F:DNA-directed RNA polymerase activity"/>
    <property type="evidence" value="ECO:0007669"/>
    <property type="project" value="UniProtKB-UniRule"/>
</dbReference>
<dbReference type="GO" id="GO:0032549">
    <property type="term" value="F:ribonucleoside binding"/>
    <property type="evidence" value="ECO:0007669"/>
    <property type="project" value="InterPro"/>
</dbReference>
<dbReference type="GO" id="GO:0006351">
    <property type="term" value="P:DNA-templated transcription"/>
    <property type="evidence" value="ECO:0007669"/>
    <property type="project" value="UniProtKB-UniRule"/>
</dbReference>
<dbReference type="CDD" id="cd00653">
    <property type="entry name" value="RNA_pol_B_RPB2"/>
    <property type="match status" value="1"/>
</dbReference>
<dbReference type="FunFam" id="2.40.50.100:FF:000006">
    <property type="entry name" value="DNA-directed RNA polymerase subunit beta"/>
    <property type="match status" value="1"/>
</dbReference>
<dbReference type="FunFam" id="3.90.1800.10:FF:000001">
    <property type="entry name" value="DNA-directed RNA polymerase subunit beta"/>
    <property type="match status" value="1"/>
</dbReference>
<dbReference type="Gene3D" id="2.40.50.100">
    <property type="match status" value="1"/>
</dbReference>
<dbReference type="Gene3D" id="2.40.50.150">
    <property type="match status" value="1"/>
</dbReference>
<dbReference type="Gene3D" id="3.90.1100.10">
    <property type="match status" value="2"/>
</dbReference>
<dbReference type="Gene3D" id="2.30.150.10">
    <property type="entry name" value="DNA-directed RNA polymerase, beta subunit, external 1 domain"/>
    <property type="match status" value="1"/>
</dbReference>
<dbReference type="Gene3D" id="2.40.270.10">
    <property type="entry name" value="DNA-directed RNA polymerase, subunit 2, domain 6"/>
    <property type="match status" value="1"/>
</dbReference>
<dbReference type="Gene3D" id="3.90.1800.10">
    <property type="entry name" value="RNA polymerase alpha subunit dimerisation domain"/>
    <property type="match status" value="1"/>
</dbReference>
<dbReference type="Gene3D" id="3.90.1110.10">
    <property type="entry name" value="RNA polymerase Rpb2, domain 2"/>
    <property type="match status" value="1"/>
</dbReference>
<dbReference type="HAMAP" id="MF_01321">
    <property type="entry name" value="RNApol_bact_RpoB"/>
    <property type="match status" value="1"/>
</dbReference>
<dbReference type="InterPro" id="IPR042107">
    <property type="entry name" value="DNA-dir_RNA_pol_bsu_ext_1_sf"/>
</dbReference>
<dbReference type="InterPro" id="IPR019462">
    <property type="entry name" value="DNA-dir_RNA_pol_bsu_external_1"/>
</dbReference>
<dbReference type="InterPro" id="IPR015712">
    <property type="entry name" value="DNA-dir_RNA_pol_su2"/>
</dbReference>
<dbReference type="InterPro" id="IPR007120">
    <property type="entry name" value="DNA-dir_RNAP_su2_dom"/>
</dbReference>
<dbReference type="InterPro" id="IPR037033">
    <property type="entry name" value="DNA-dir_RNAP_su2_hyb_sf"/>
</dbReference>
<dbReference type="InterPro" id="IPR010243">
    <property type="entry name" value="RNA_pol_bsu_bac"/>
</dbReference>
<dbReference type="InterPro" id="IPR007121">
    <property type="entry name" value="RNA_pol_bsu_CS"/>
</dbReference>
<dbReference type="InterPro" id="IPR007644">
    <property type="entry name" value="RNA_pol_bsu_protrusion"/>
</dbReference>
<dbReference type="InterPro" id="IPR007642">
    <property type="entry name" value="RNA_pol_Rpb2_2"/>
</dbReference>
<dbReference type="InterPro" id="IPR037034">
    <property type="entry name" value="RNA_pol_Rpb2_2_sf"/>
</dbReference>
<dbReference type="InterPro" id="IPR007645">
    <property type="entry name" value="RNA_pol_Rpb2_3"/>
</dbReference>
<dbReference type="InterPro" id="IPR007641">
    <property type="entry name" value="RNA_pol_Rpb2_7"/>
</dbReference>
<dbReference type="InterPro" id="IPR014724">
    <property type="entry name" value="RNA_pol_RPB2_OB-fold"/>
</dbReference>
<dbReference type="NCBIfam" id="NF001616">
    <property type="entry name" value="PRK00405.1"/>
    <property type="match status" value="1"/>
</dbReference>
<dbReference type="NCBIfam" id="TIGR02013">
    <property type="entry name" value="rpoB"/>
    <property type="match status" value="1"/>
</dbReference>
<dbReference type="PANTHER" id="PTHR20856">
    <property type="entry name" value="DNA-DIRECTED RNA POLYMERASE I SUBUNIT 2"/>
    <property type="match status" value="1"/>
</dbReference>
<dbReference type="Pfam" id="PF04563">
    <property type="entry name" value="RNA_pol_Rpb2_1"/>
    <property type="match status" value="1"/>
</dbReference>
<dbReference type="Pfam" id="PF04561">
    <property type="entry name" value="RNA_pol_Rpb2_2"/>
    <property type="match status" value="2"/>
</dbReference>
<dbReference type="Pfam" id="PF04565">
    <property type="entry name" value="RNA_pol_Rpb2_3"/>
    <property type="match status" value="1"/>
</dbReference>
<dbReference type="Pfam" id="PF10385">
    <property type="entry name" value="RNA_pol_Rpb2_45"/>
    <property type="match status" value="1"/>
</dbReference>
<dbReference type="Pfam" id="PF00562">
    <property type="entry name" value="RNA_pol_Rpb2_6"/>
    <property type="match status" value="1"/>
</dbReference>
<dbReference type="Pfam" id="PF04560">
    <property type="entry name" value="RNA_pol_Rpb2_7"/>
    <property type="match status" value="1"/>
</dbReference>
<dbReference type="SUPFAM" id="SSF64484">
    <property type="entry name" value="beta and beta-prime subunits of DNA dependent RNA-polymerase"/>
    <property type="match status" value="1"/>
</dbReference>
<dbReference type="PROSITE" id="PS01166">
    <property type="entry name" value="RNA_POL_BETA"/>
    <property type="match status" value="1"/>
</dbReference>
<feature type="chain" id="PRO_0000300358" description="DNA-directed RNA polymerase subunit beta">
    <location>
        <begin position="1"/>
        <end position="1380"/>
    </location>
</feature>
<accession>Q1QN44</accession>
<name>RPOB_NITHX</name>
<gene>
    <name evidence="1" type="primary">rpoB</name>
    <name type="ordered locus">Nham_1531</name>
</gene>
<reference key="1">
    <citation type="submission" date="2006-03" db="EMBL/GenBank/DDBJ databases">
        <title>Complete sequence of chromosome of Nitrobacter hamburgensis X14.</title>
        <authorList>
            <consortium name="US DOE Joint Genome Institute"/>
            <person name="Copeland A."/>
            <person name="Lucas S."/>
            <person name="Lapidus A."/>
            <person name="Barry K."/>
            <person name="Detter J.C."/>
            <person name="Glavina del Rio T."/>
            <person name="Hammon N."/>
            <person name="Israni S."/>
            <person name="Dalin E."/>
            <person name="Tice H."/>
            <person name="Pitluck S."/>
            <person name="Chain P."/>
            <person name="Malfatti S."/>
            <person name="Shin M."/>
            <person name="Vergez L."/>
            <person name="Schmutz J."/>
            <person name="Larimer F."/>
            <person name="Land M."/>
            <person name="Hauser L."/>
            <person name="Kyrpides N."/>
            <person name="Ivanova N."/>
            <person name="Ward B."/>
            <person name="Arp D."/>
            <person name="Klotz M."/>
            <person name="Stein L."/>
            <person name="O'Mullan G."/>
            <person name="Starkenburg S."/>
            <person name="Sayavedra L."/>
            <person name="Poret-Peterson A.T."/>
            <person name="Gentry M.E."/>
            <person name="Bruce D."/>
            <person name="Richardson P."/>
        </authorList>
    </citation>
    <scope>NUCLEOTIDE SEQUENCE [LARGE SCALE GENOMIC DNA]</scope>
    <source>
        <strain>DSM 10229 / NCIMB 13809 / X14</strain>
    </source>
</reference>
<organism>
    <name type="scientific">Nitrobacter hamburgensis (strain DSM 10229 / NCIMB 13809 / X14)</name>
    <dbReference type="NCBI Taxonomy" id="323097"/>
    <lineage>
        <taxon>Bacteria</taxon>
        <taxon>Pseudomonadati</taxon>
        <taxon>Pseudomonadota</taxon>
        <taxon>Alphaproteobacteria</taxon>
        <taxon>Hyphomicrobiales</taxon>
        <taxon>Nitrobacteraceae</taxon>
        <taxon>Nitrobacter</taxon>
    </lineage>
</organism>
<comment type="function">
    <text evidence="1">DNA-dependent RNA polymerase catalyzes the transcription of DNA into RNA using the four ribonucleoside triphosphates as substrates.</text>
</comment>
<comment type="catalytic activity">
    <reaction evidence="1">
        <text>RNA(n) + a ribonucleoside 5'-triphosphate = RNA(n+1) + diphosphate</text>
        <dbReference type="Rhea" id="RHEA:21248"/>
        <dbReference type="Rhea" id="RHEA-COMP:14527"/>
        <dbReference type="Rhea" id="RHEA-COMP:17342"/>
        <dbReference type="ChEBI" id="CHEBI:33019"/>
        <dbReference type="ChEBI" id="CHEBI:61557"/>
        <dbReference type="ChEBI" id="CHEBI:140395"/>
        <dbReference type="EC" id="2.7.7.6"/>
    </reaction>
</comment>
<comment type="subunit">
    <text evidence="1">The RNAP catalytic core consists of 2 alpha, 1 beta, 1 beta' and 1 omega subunit. When a sigma factor is associated with the core the holoenzyme is formed, which can initiate transcription.</text>
</comment>
<comment type="similarity">
    <text evidence="1">Belongs to the RNA polymerase beta chain family.</text>
</comment>
<sequence>MVQQTFTGRKRVRKFFGHIREVAEMPNLIEVQKASYDQFLMVDEPEGGRLDEGLQAVFKSVFPINDFSGTSQLEFVRYEFEAPKYDVDECRQRGMTYAAPLKVTLRLIVFDIDEETAAKSVKDIKEQDVYMGDIPLMTMNGTFVVNGTERVIVSQMHRSPGVFFDHDKGKTHSSGKLLFAARVIPYRGSWLDIEFDAKDIVFARIDRRRKIPVTSLMFALGLDGEEILSTFYKKIIYKRAKSGSNADGWRVPYDPVRFRGYSTLNDLIDADSGKVVLEAGKKLTVRAARQLQEKGLKALRMSDEELVGMYLAEDLVNPKTGEIYAEAGEEITEKSLKALNEHGYKELPLLDIDHVNVGPYIRNTLSADKNLTREDALFDIYRVMRPGEPPTLESAQNMFQSLFFDSERYDLSAVGRVKMNMRLDLDAPDTYRTLRKEDILAVIKTLVDLRDGKGEIDDIDHLGNRRVRSVGELMENQYRVGLLRMERAIKERMSSVDIDTVMPQDLINAKPAAAAVREFFGSSQLSQFMDQTNPLSEITHKRRLSALGPGGLTRERAGFEVRDVHPTHYGRICPIETPEGPNIGLINSLATFARVNKYGFVETPYRKVKDGRVTDEVVYLSAMEEGRYHVAQANLPLDNRGRFTEDLVVCRHAGEVLPVTSDKVDFMDVSPKQLVSVAAALIPFLENDDANRALMGSNMQRQAVPLVRAEAPFVGTGMEGVVARDSGAAIAARRSGIIDQIDATRVVIRATEDLDPTKSGVDIYRLMKYQRSNQSTCINQRPLVKVGDVVKKGDIIADGPSTDLGELALGRNVLVAFMPWNGYNFEDSILLSERIVKEDVFTSIHIEEFEVMARDTKLGPEEITRDIPNVSEEALKNLDEAGIVYIGAEVRAGDILVGKITPKGESPMTPEEKLLRAIFGEKASDVRDTSLRVPPGVQGTIVEVRVFNRHGVDKDERALAIEREEIERLAKDRDDEQAILDRNVYGRLADLLENRQGIAGPKGFKKDTKITRSVIEEYPKSQWWLFASPNDKLMAEIEAMRKQYDESKKGLEQRFLDKVEKLQRGDELPPGVMKMVKVFVAVKRKIQPGDKMAGRHGNKGVVSKIVPIEDMPFLEDGTHADIVLNPLGVPSRMNVGQILETHLGWACAGLGRRIGQAVDAYLASAKQETKPLKETLKKVYGDNETIKSLNDHELVELGRNLSRGVPIATPVFDGAKEADIEQMLELAGMDKSGQSTVYDGRTGDTFDRKVTVGYIYMLKLHHLVDDKIHARSIGPYSLVTQQPLGGKAQFGGQRFGEMEVWALEAYGAAYTLQEMLTVKSDDVAGRTKVYEAIVRGDDTFEAGIPESFNVLVKEMRSLGLNVDLHNSKIGSATPTSEAAE</sequence>
<evidence type="ECO:0000255" key="1">
    <source>
        <dbReference type="HAMAP-Rule" id="MF_01321"/>
    </source>
</evidence>
<keyword id="KW-0240">DNA-directed RNA polymerase</keyword>
<keyword id="KW-0548">Nucleotidyltransferase</keyword>
<keyword id="KW-1185">Reference proteome</keyword>
<keyword id="KW-0804">Transcription</keyword>
<keyword id="KW-0808">Transferase</keyword>